<sequence>MYAYIKGKLSQLFPTHVVVETNGVGYEIQTPNSYRFQQYYQQEVTIYTSLVVREDAQLLYGFMSEEEKGMFLSLNKVTGIGPKSALAILAASTPNEVKIGIENENETYLTKFPGIGKKTARQIILDLKGKVQITEENPETLLNFEGSESNQTSPILDEALLALEALGYSKRELNKVEKKLQAESYTSVDEAVKAGLKILVS</sequence>
<keyword id="KW-0963">Cytoplasm</keyword>
<keyword id="KW-0227">DNA damage</keyword>
<keyword id="KW-0233">DNA recombination</keyword>
<keyword id="KW-0234">DNA repair</keyword>
<keyword id="KW-0238">DNA-binding</keyword>
<keyword id="KW-1185">Reference proteome</keyword>
<dbReference type="EMBL" id="AM295250">
    <property type="protein sequence ID" value="CAL28160.1"/>
    <property type="molecule type" value="Genomic_DNA"/>
</dbReference>
<dbReference type="RefSeq" id="WP_015900500.1">
    <property type="nucleotide sequence ID" value="NC_012121.1"/>
</dbReference>
<dbReference type="SMR" id="B9DNE5"/>
<dbReference type="GeneID" id="93793679"/>
<dbReference type="KEGG" id="sca:SCA_1253"/>
<dbReference type="eggNOG" id="COG0632">
    <property type="taxonomic scope" value="Bacteria"/>
</dbReference>
<dbReference type="HOGENOM" id="CLU_087936_1_0_9"/>
<dbReference type="OrthoDB" id="5293449at2"/>
<dbReference type="BioCyc" id="SCAR396513:SCA_RS06265-MONOMER"/>
<dbReference type="Proteomes" id="UP000000444">
    <property type="component" value="Chromosome"/>
</dbReference>
<dbReference type="GO" id="GO:0005737">
    <property type="term" value="C:cytoplasm"/>
    <property type="evidence" value="ECO:0007669"/>
    <property type="project" value="UniProtKB-SubCell"/>
</dbReference>
<dbReference type="GO" id="GO:0009379">
    <property type="term" value="C:Holliday junction helicase complex"/>
    <property type="evidence" value="ECO:0007669"/>
    <property type="project" value="InterPro"/>
</dbReference>
<dbReference type="GO" id="GO:0048476">
    <property type="term" value="C:Holliday junction resolvase complex"/>
    <property type="evidence" value="ECO:0007669"/>
    <property type="project" value="UniProtKB-UniRule"/>
</dbReference>
<dbReference type="GO" id="GO:0005524">
    <property type="term" value="F:ATP binding"/>
    <property type="evidence" value="ECO:0007669"/>
    <property type="project" value="InterPro"/>
</dbReference>
<dbReference type="GO" id="GO:0000400">
    <property type="term" value="F:four-way junction DNA binding"/>
    <property type="evidence" value="ECO:0007669"/>
    <property type="project" value="UniProtKB-UniRule"/>
</dbReference>
<dbReference type="GO" id="GO:0009378">
    <property type="term" value="F:four-way junction helicase activity"/>
    <property type="evidence" value="ECO:0007669"/>
    <property type="project" value="InterPro"/>
</dbReference>
<dbReference type="GO" id="GO:0006310">
    <property type="term" value="P:DNA recombination"/>
    <property type="evidence" value="ECO:0007669"/>
    <property type="project" value="UniProtKB-UniRule"/>
</dbReference>
<dbReference type="GO" id="GO:0006281">
    <property type="term" value="P:DNA repair"/>
    <property type="evidence" value="ECO:0007669"/>
    <property type="project" value="UniProtKB-UniRule"/>
</dbReference>
<dbReference type="CDD" id="cd14332">
    <property type="entry name" value="UBA_RuvA_C"/>
    <property type="match status" value="1"/>
</dbReference>
<dbReference type="Gene3D" id="1.10.150.20">
    <property type="entry name" value="5' to 3' exonuclease, C-terminal subdomain"/>
    <property type="match status" value="1"/>
</dbReference>
<dbReference type="Gene3D" id="1.10.8.10">
    <property type="entry name" value="DNA helicase RuvA subunit, C-terminal domain"/>
    <property type="match status" value="1"/>
</dbReference>
<dbReference type="Gene3D" id="2.40.50.140">
    <property type="entry name" value="Nucleic acid-binding proteins"/>
    <property type="match status" value="1"/>
</dbReference>
<dbReference type="HAMAP" id="MF_00031">
    <property type="entry name" value="DNA_HJ_migration_RuvA"/>
    <property type="match status" value="1"/>
</dbReference>
<dbReference type="InterPro" id="IPR013849">
    <property type="entry name" value="DNA_helicase_Holl-junc_RuvA_I"/>
</dbReference>
<dbReference type="InterPro" id="IPR003583">
    <property type="entry name" value="Hlx-hairpin-Hlx_DNA-bd_motif"/>
</dbReference>
<dbReference type="InterPro" id="IPR012340">
    <property type="entry name" value="NA-bd_OB-fold"/>
</dbReference>
<dbReference type="InterPro" id="IPR000085">
    <property type="entry name" value="RuvA"/>
</dbReference>
<dbReference type="InterPro" id="IPR010994">
    <property type="entry name" value="RuvA_2-like"/>
</dbReference>
<dbReference type="InterPro" id="IPR011114">
    <property type="entry name" value="RuvA_C"/>
</dbReference>
<dbReference type="InterPro" id="IPR036267">
    <property type="entry name" value="RuvA_C_sf"/>
</dbReference>
<dbReference type="NCBIfam" id="TIGR00084">
    <property type="entry name" value="ruvA"/>
    <property type="match status" value="1"/>
</dbReference>
<dbReference type="Pfam" id="PF14520">
    <property type="entry name" value="HHH_5"/>
    <property type="match status" value="1"/>
</dbReference>
<dbReference type="Pfam" id="PF07499">
    <property type="entry name" value="RuvA_C"/>
    <property type="match status" value="1"/>
</dbReference>
<dbReference type="Pfam" id="PF01330">
    <property type="entry name" value="RuvA_N"/>
    <property type="match status" value="1"/>
</dbReference>
<dbReference type="SMART" id="SM00278">
    <property type="entry name" value="HhH1"/>
    <property type="match status" value="2"/>
</dbReference>
<dbReference type="SUPFAM" id="SSF46929">
    <property type="entry name" value="DNA helicase RuvA subunit, C-terminal domain"/>
    <property type="match status" value="1"/>
</dbReference>
<dbReference type="SUPFAM" id="SSF50249">
    <property type="entry name" value="Nucleic acid-binding proteins"/>
    <property type="match status" value="1"/>
</dbReference>
<dbReference type="SUPFAM" id="SSF47781">
    <property type="entry name" value="RuvA domain 2-like"/>
    <property type="match status" value="1"/>
</dbReference>
<gene>
    <name evidence="1" type="primary">ruvA</name>
    <name type="ordered locus">Sca_1253</name>
</gene>
<proteinExistence type="inferred from homology"/>
<organism>
    <name type="scientific">Staphylococcus carnosus (strain TM300)</name>
    <dbReference type="NCBI Taxonomy" id="396513"/>
    <lineage>
        <taxon>Bacteria</taxon>
        <taxon>Bacillati</taxon>
        <taxon>Bacillota</taxon>
        <taxon>Bacilli</taxon>
        <taxon>Bacillales</taxon>
        <taxon>Staphylococcaceae</taxon>
        <taxon>Staphylococcus</taxon>
    </lineage>
</organism>
<protein>
    <recommendedName>
        <fullName evidence="1">Holliday junction branch migration complex subunit RuvA</fullName>
    </recommendedName>
</protein>
<comment type="function">
    <text evidence="1">The RuvA-RuvB-RuvC complex processes Holliday junction (HJ) DNA during genetic recombination and DNA repair, while the RuvA-RuvB complex plays an important role in the rescue of blocked DNA replication forks via replication fork reversal (RFR). RuvA specifically binds to HJ cruciform DNA, conferring on it an open structure. The RuvB hexamer acts as an ATP-dependent pump, pulling dsDNA into and through the RuvAB complex. HJ branch migration allows RuvC to scan DNA until it finds its consensus sequence, where it cleaves and resolves the cruciform DNA.</text>
</comment>
<comment type="subunit">
    <text evidence="1">Homotetramer. Forms an RuvA(8)-RuvB(12)-Holliday junction (HJ) complex. HJ DNA is sandwiched between 2 RuvA tetramers; dsDNA enters through RuvA and exits via RuvB. An RuvB hexamer assembles on each DNA strand where it exits the tetramer. Each RuvB hexamer is contacted by two RuvA subunits (via domain III) on 2 adjacent RuvB subunits; this complex drives branch migration. In the full resolvosome a probable DNA-RuvA(4)-RuvB(12)-RuvC(2) complex forms which resolves the HJ.</text>
</comment>
<comment type="subcellular location">
    <subcellularLocation>
        <location evidence="1">Cytoplasm</location>
    </subcellularLocation>
</comment>
<comment type="domain">
    <text evidence="1">Has three domains with a flexible linker between the domains II and III and assumes an 'L' shape. Domain III is highly mobile and contacts RuvB.</text>
</comment>
<comment type="similarity">
    <text evidence="1">Belongs to the RuvA family.</text>
</comment>
<evidence type="ECO:0000255" key="1">
    <source>
        <dbReference type="HAMAP-Rule" id="MF_00031"/>
    </source>
</evidence>
<name>RUVA_STACT</name>
<accession>B9DNE5</accession>
<feature type="chain" id="PRO_1000116978" description="Holliday junction branch migration complex subunit RuvA">
    <location>
        <begin position="1"/>
        <end position="201"/>
    </location>
</feature>
<feature type="region of interest" description="Domain I" evidence="1">
    <location>
        <begin position="1"/>
        <end position="63"/>
    </location>
</feature>
<feature type="region of interest" description="Domain II" evidence="1">
    <location>
        <begin position="64"/>
        <end position="142"/>
    </location>
</feature>
<feature type="region of interest" description="Flexible linker" evidence="1">
    <location>
        <begin position="143"/>
        <end position="153"/>
    </location>
</feature>
<feature type="region of interest" description="Domain III" evidence="1">
    <location>
        <begin position="153"/>
        <end position="201"/>
    </location>
</feature>
<reference key="1">
    <citation type="journal article" date="2009" name="Appl. Environ. Microbiol.">
        <title>Genome analysis of the meat starter culture bacterium Staphylococcus carnosus TM300.</title>
        <authorList>
            <person name="Rosenstein R."/>
            <person name="Nerz C."/>
            <person name="Biswas L."/>
            <person name="Resch A."/>
            <person name="Raddatz G."/>
            <person name="Schuster S.C."/>
            <person name="Goetz F."/>
        </authorList>
    </citation>
    <scope>NUCLEOTIDE SEQUENCE [LARGE SCALE GENOMIC DNA]</scope>
    <source>
        <strain>TM300</strain>
    </source>
</reference>